<feature type="chain" id="PRO_0000251552" description="Large ribosomal subunit protein uL15">
    <location>
        <begin position="1"/>
        <end position="161"/>
    </location>
</feature>
<feature type="region of interest" description="Disordered" evidence="2">
    <location>
        <begin position="1"/>
        <end position="43"/>
    </location>
</feature>
<feature type="compositionally biased region" description="Gly residues" evidence="2">
    <location>
        <begin position="21"/>
        <end position="37"/>
    </location>
</feature>
<organism>
    <name type="scientific">Rhodopseudomonas palustris (strain BisB5)</name>
    <dbReference type="NCBI Taxonomy" id="316057"/>
    <lineage>
        <taxon>Bacteria</taxon>
        <taxon>Pseudomonadati</taxon>
        <taxon>Pseudomonadota</taxon>
        <taxon>Alphaproteobacteria</taxon>
        <taxon>Hyphomicrobiales</taxon>
        <taxon>Nitrobacteraceae</taxon>
        <taxon>Rhodopseudomonas</taxon>
    </lineage>
</organism>
<reference key="1">
    <citation type="submission" date="2006-03" db="EMBL/GenBank/DDBJ databases">
        <title>Complete sequence of Rhodopseudomonas palustris BisB5.</title>
        <authorList>
            <consortium name="US DOE Joint Genome Institute"/>
            <person name="Copeland A."/>
            <person name="Lucas S."/>
            <person name="Lapidus A."/>
            <person name="Barry K."/>
            <person name="Detter J.C."/>
            <person name="Glavina del Rio T."/>
            <person name="Hammon N."/>
            <person name="Israni S."/>
            <person name="Dalin E."/>
            <person name="Tice H."/>
            <person name="Pitluck S."/>
            <person name="Chain P."/>
            <person name="Malfatti S."/>
            <person name="Shin M."/>
            <person name="Vergez L."/>
            <person name="Schmutz J."/>
            <person name="Larimer F."/>
            <person name="Land M."/>
            <person name="Hauser L."/>
            <person name="Pelletier D.A."/>
            <person name="Kyrpides N."/>
            <person name="Lykidis A."/>
            <person name="Oda Y."/>
            <person name="Harwood C.S."/>
            <person name="Richardson P."/>
        </authorList>
    </citation>
    <scope>NUCLEOTIDE SEQUENCE [LARGE SCALE GENOMIC DNA]</scope>
    <source>
        <strain>BisB5</strain>
    </source>
</reference>
<evidence type="ECO:0000255" key="1">
    <source>
        <dbReference type="HAMAP-Rule" id="MF_01341"/>
    </source>
</evidence>
<evidence type="ECO:0000256" key="2">
    <source>
        <dbReference type="SAM" id="MobiDB-lite"/>
    </source>
</evidence>
<evidence type="ECO:0000305" key="3"/>
<protein>
    <recommendedName>
        <fullName evidence="1">Large ribosomal subunit protein uL15</fullName>
    </recommendedName>
    <alternativeName>
        <fullName evidence="3">50S ribosomal protein L15</fullName>
    </alternativeName>
</protein>
<keyword id="KW-0687">Ribonucleoprotein</keyword>
<keyword id="KW-0689">Ribosomal protein</keyword>
<keyword id="KW-0694">RNA-binding</keyword>
<keyword id="KW-0699">rRNA-binding</keyword>
<sequence>MKLSEISDNPGARKKRMRIGRGIGSGKGKTGGRGGKGQTARSGVRIKGFEGGQMPLHRRLPKRGFNNIFRLEFSEINLDRLQDAIDAKTIDASAVINAESLVAAGVLRRSRDGVRLLGRGELKSKLTIEVHGATKSAIEAVEKAGGSVKILAPKEDKGEAA</sequence>
<accession>Q37M24</accession>
<comment type="function">
    <text evidence="1">Binds to the 23S rRNA.</text>
</comment>
<comment type="subunit">
    <text evidence="1">Part of the 50S ribosomal subunit.</text>
</comment>
<comment type="similarity">
    <text evidence="1">Belongs to the universal ribosomal protein uL15 family.</text>
</comment>
<proteinExistence type="inferred from homology"/>
<dbReference type="EMBL" id="CP000283">
    <property type="protein sequence ID" value="ABE40391.1"/>
    <property type="molecule type" value="Genomic_DNA"/>
</dbReference>
<dbReference type="SMR" id="Q37M24"/>
<dbReference type="STRING" id="316057.RPD_3165"/>
<dbReference type="KEGG" id="rpd:RPD_3165"/>
<dbReference type="eggNOG" id="COG0200">
    <property type="taxonomic scope" value="Bacteria"/>
</dbReference>
<dbReference type="HOGENOM" id="CLU_055188_4_0_5"/>
<dbReference type="BioCyc" id="RPAL316057:RPD_RS15890-MONOMER"/>
<dbReference type="Proteomes" id="UP000001818">
    <property type="component" value="Chromosome"/>
</dbReference>
<dbReference type="GO" id="GO:0022625">
    <property type="term" value="C:cytosolic large ribosomal subunit"/>
    <property type="evidence" value="ECO:0007669"/>
    <property type="project" value="TreeGrafter"/>
</dbReference>
<dbReference type="GO" id="GO:0019843">
    <property type="term" value="F:rRNA binding"/>
    <property type="evidence" value="ECO:0007669"/>
    <property type="project" value="UniProtKB-UniRule"/>
</dbReference>
<dbReference type="GO" id="GO:0003735">
    <property type="term" value="F:structural constituent of ribosome"/>
    <property type="evidence" value="ECO:0007669"/>
    <property type="project" value="InterPro"/>
</dbReference>
<dbReference type="GO" id="GO:0006412">
    <property type="term" value="P:translation"/>
    <property type="evidence" value="ECO:0007669"/>
    <property type="project" value="UniProtKB-UniRule"/>
</dbReference>
<dbReference type="Gene3D" id="3.100.10.10">
    <property type="match status" value="1"/>
</dbReference>
<dbReference type="HAMAP" id="MF_01341">
    <property type="entry name" value="Ribosomal_uL15"/>
    <property type="match status" value="1"/>
</dbReference>
<dbReference type="InterPro" id="IPR030878">
    <property type="entry name" value="Ribosomal_uL15"/>
</dbReference>
<dbReference type="InterPro" id="IPR021131">
    <property type="entry name" value="Ribosomal_uL15/eL18"/>
</dbReference>
<dbReference type="InterPro" id="IPR036227">
    <property type="entry name" value="Ribosomal_uL15/eL18_sf"/>
</dbReference>
<dbReference type="InterPro" id="IPR005749">
    <property type="entry name" value="Ribosomal_uL15_bac-type"/>
</dbReference>
<dbReference type="InterPro" id="IPR001196">
    <property type="entry name" value="Ribosomal_uL15_CS"/>
</dbReference>
<dbReference type="NCBIfam" id="TIGR01071">
    <property type="entry name" value="rplO_bact"/>
    <property type="match status" value="1"/>
</dbReference>
<dbReference type="PANTHER" id="PTHR12934">
    <property type="entry name" value="50S RIBOSOMAL PROTEIN L15"/>
    <property type="match status" value="1"/>
</dbReference>
<dbReference type="PANTHER" id="PTHR12934:SF11">
    <property type="entry name" value="LARGE RIBOSOMAL SUBUNIT PROTEIN UL15M"/>
    <property type="match status" value="1"/>
</dbReference>
<dbReference type="Pfam" id="PF00828">
    <property type="entry name" value="Ribosomal_L27A"/>
    <property type="match status" value="1"/>
</dbReference>
<dbReference type="SUPFAM" id="SSF52080">
    <property type="entry name" value="Ribosomal proteins L15p and L18e"/>
    <property type="match status" value="1"/>
</dbReference>
<dbReference type="PROSITE" id="PS00475">
    <property type="entry name" value="RIBOSOMAL_L15"/>
    <property type="match status" value="1"/>
</dbReference>
<name>RL15_RHOPS</name>
<gene>
    <name evidence="1" type="primary">rplO</name>
    <name type="ordered locus">RPD_3165</name>
</gene>